<comment type="function">
    <text evidence="1">F(1)F(0) ATP synthase produces ATP from ADP in the presence of a proton or sodium gradient. F-type ATPases consist of two structural domains, F(1) containing the extramembraneous catalytic core and F(0) containing the membrane proton channel, linked together by a central stalk and a peripheral stalk. During catalysis, ATP synthesis in the catalytic domain of F(1) is coupled via a rotary mechanism of the central stalk subunits to proton translocation.</text>
</comment>
<comment type="function">
    <text evidence="1">Component of the F(0) channel, it forms part of the peripheral stalk, linking F(1) to F(0).</text>
</comment>
<comment type="subunit">
    <text evidence="1">F-type ATPases have 2 components, F(1) - the catalytic core - and F(0) - the membrane proton channel. F(1) has five subunits: alpha(3), beta(3), gamma(1), delta(1), epsilon(1). F(0) has three main subunits: a(1), b(2) and c(10-14). The alpha and beta chains form an alternating ring which encloses part of the gamma chain. F(1) is attached to F(0) by a central stalk formed by the gamma and epsilon chains, while a peripheral stalk is formed by the delta and b chains.</text>
</comment>
<comment type="subcellular location">
    <subcellularLocation>
        <location evidence="1">Cell membrane</location>
        <topology evidence="1">Single-pass membrane protein</topology>
    </subcellularLocation>
</comment>
<comment type="similarity">
    <text evidence="1">Belongs to the ATPase B chain family.</text>
</comment>
<reference key="1">
    <citation type="journal article" date="2005" name="J. Bacteriol.">
        <title>Insights on evolution of virulence and resistance from the complete genome analysis of an early methicillin-resistant Staphylococcus aureus strain and a biofilm-producing methicillin-resistant Staphylococcus epidermidis strain.</title>
        <authorList>
            <person name="Gill S.R."/>
            <person name="Fouts D.E."/>
            <person name="Archer G.L."/>
            <person name="Mongodin E.F."/>
            <person name="DeBoy R.T."/>
            <person name="Ravel J."/>
            <person name="Paulsen I.T."/>
            <person name="Kolonay J.F."/>
            <person name="Brinkac L.M."/>
            <person name="Beanan M.J."/>
            <person name="Dodson R.J."/>
            <person name="Daugherty S.C."/>
            <person name="Madupu R."/>
            <person name="Angiuoli S.V."/>
            <person name="Durkin A.S."/>
            <person name="Haft D.H."/>
            <person name="Vamathevan J.J."/>
            <person name="Khouri H."/>
            <person name="Utterback T.R."/>
            <person name="Lee C."/>
            <person name="Dimitrov G."/>
            <person name="Jiang L."/>
            <person name="Qin H."/>
            <person name="Weidman J."/>
            <person name="Tran K."/>
            <person name="Kang K.H."/>
            <person name="Hance I.R."/>
            <person name="Nelson K.E."/>
            <person name="Fraser C.M."/>
        </authorList>
    </citation>
    <scope>NUCLEOTIDE SEQUENCE [LARGE SCALE GENOMIC DNA]</scope>
    <source>
        <strain>COL</strain>
    </source>
</reference>
<sequence>MTETANLFVLGAAGGVEWGTVIVQVLTFIVLLALLKKFAWGPLKDVMDKRERDINRDIDDAEQAKLNAQKLEEENKQKLKETQEEVQKILEDAKVQARQQQEQIIHEANVRANGMIETAQSEINSQKERAIADINNQVSELSVLIASKVLRKEISEQDQKALVDKYLKEAGDK</sequence>
<protein>
    <recommendedName>
        <fullName evidence="1">ATP synthase subunit b</fullName>
    </recommendedName>
    <alternativeName>
        <fullName evidence="1">ATP synthase F(0) sector subunit b</fullName>
    </alternativeName>
    <alternativeName>
        <fullName evidence="1">ATPase subunit I</fullName>
    </alternativeName>
    <alternativeName>
        <fullName evidence="1">F-type ATPase subunit b</fullName>
        <shortName evidence="1">F-ATPase subunit b</shortName>
    </alternativeName>
</protein>
<name>ATPF_STAAC</name>
<accession>Q5HE93</accession>
<proteinExistence type="inferred from homology"/>
<organism>
    <name type="scientific">Staphylococcus aureus (strain COL)</name>
    <dbReference type="NCBI Taxonomy" id="93062"/>
    <lineage>
        <taxon>Bacteria</taxon>
        <taxon>Bacillati</taxon>
        <taxon>Bacillota</taxon>
        <taxon>Bacilli</taxon>
        <taxon>Bacillales</taxon>
        <taxon>Staphylococcaceae</taxon>
        <taxon>Staphylococcus</taxon>
    </lineage>
</organism>
<dbReference type="EMBL" id="CP000046">
    <property type="protein sequence ID" value="AAW38409.1"/>
    <property type="molecule type" value="Genomic_DNA"/>
</dbReference>
<dbReference type="RefSeq" id="WP_000140679.1">
    <property type="nucleotide sequence ID" value="NZ_JBGOFO010000007.1"/>
</dbReference>
<dbReference type="SMR" id="Q5HE93"/>
<dbReference type="KEGG" id="sac:SACOL2099"/>
<dbReference type="HOGENOM" id="CLU_079215_4_2_9"/>
<dbReference type="Proteomes" id="UP000000530">
    <property type="component" value="Chromosome"/>
</dbReference>
<dbReference type="GO" id="GO:0005886">
    <property type="term" value="C:plasma membrane"/>
    <property type="evidence" value="ECO:0007669"/>
    <property type="project" value="UniProtKB-SubCell"/>
</dbReference>
<dbReference type="GO" id="GO:0045259">
    <property type="term" value="C:proton-transporting ATP synthase complex"/>
    <property type="evidence" value="ECO:0007669"/>
    <property type="project" value="UniProtKB-KW"/>
</dbReference>
<dbReference type="GO" id="GO:0046933">
    <property type="term" value="F:proton-transporting ATP synthase activity, rotational mechanism"/>
    <property type="evidence" value="ECO:0007669"/>
    <property type="project" value="UniProtKB-UniRule"/>
</dbReference>
<dbReference type="GO" id="GO:0046961">
    <property type="term" value="F:proton-transporting ATPase activity, rotational mechanism"/>
    <property type="evidence" value="ECO:0007669"/>
    <property type="project" value="TreeGrafter"/>
</dbReference>
<dbReference type="CDD" id="cd06503">
    <property type="entry name" value="ATP-synt_Fo_b"/>
    <property type="match status" value="1"/>
</dbReference>
<dbReference type="HAMAP" id="MF_01398">
    <property type="entry name" value="ATP_synth_b_bprime"/>
    <property type="match status" value="1"/>
</dbReference>
<dbReference type="InterPro" id="IPR028987">
    <property type="entry name" value="ATP_synth_B-like_membr_sf"/>
</dbReference>
<dbReference type="InterPro" id="IPR002146">
    <property type="entry name" value="ATP_synth_b/b'su_bac/chlpt"/>
</dbReference>
<dbReference type="InterPro" id="IPR005864">
    <property type="entry name" value="ATP_synth_F0_bsu_bac"/>
</dbReference>
<dbReference type="InterPro" id="IPR050059">
    <property type="entry name" value="ATP_synthase_B_chain"/>
</dbReference>
<dbReference type="NCBIfam" id="TIGR01144">
    <property type="entry name" value="ATP_synt_b"/>
    <property type="match status" value="1"/>
</dbReference>
<dbReference type="NCBIfam" id="NF009987">
    <property type="entry name" value="PRK13453.1"/>
    <property type="match status" value="1"/>
</dbReference>
<dbReference type="PANTHER" id="PTHR33445:SF1">
    <property type="entry name" value="ATP SYNTHASE SUBUNIT B"/>
    <property type="match status" value="1"/>
</dbReference>
<dbReference type="PANTHER" id="PTHR33445">
    <property type="entry name" value="ATP SYNTHASE SUBUNIT B', CHLOROPLASTIC"/>
    <property type="match status" value="1"/>
</dbReference>
<dbReference type="Pfam" id="PF00430">
    <property type="entry name" value="ATP-synt_B"/>
    <property type="match status" value="1"/>
</dbReference>
<dbReference type="SUPFAM" id="SSF81573">
    <property type="entry name" value="F1F0 ATP synthase subunit B, membrane domain"/>
    <property type="match status" value="1"/>
</dbReference>
<gene>
    <name evidence="1" type="primary">atpF</name>
    <name type="ordered locus">SACOL2099</name>
</gene>
<feature type="chain" id="PRO_0000223712" description="ATP synthase subunit b">
    <location>
        <begin position="1"/>
        <end position="173"/>
    </location>
</feature>
<feature type="transmembrane region" description="Helical" evidence="1">
    <location>
        <begin position="15"/>
        <end position="35"/>
    </location>
</feature>
<keyword id="KW-0066">ATP synthesis</keyword>
<keyword id="KW-1003">Cell membrane</keyword>
<keyword id="KW-0138">CF(0)</keyword>
<keyword id="KW-0375">Hydrogen ion transport</keyword>
<keyword id="KW-0406">Ion transport</keyword>
<keyword id="KW-0472">Membrane</keyword>
<keyword id="KW-0812">Transmembrane</keyword>
<keyword id="KW-1133">Transmembrane helix</keyword>
<keyword id="KW-0813">Transport</keyword>
<evidence type="ECO:0000255" key="1">
    <source>
        <dbReference type="HAMAP-Rule" id="MF_01398"/>
    </source>
</evidence>